<gene>
    <name evidence="1" type="primary">darP</name>
    <name type="ordered locus">ECA0281</name>
</gene>
<organism>
    <name type="scientific">Pectobacterium atrosepticum (strain SCRI 1043 / ATCC BAA-672)</name>
    <name type="common">Erwinia carotovora subsp. atroseptica</name>
    <dbReference type="NCBI Taxonomy" id="218491"/>
    <lineage>
        <taxon>Bacteria</taxon>
        <taxon>Pseudomonadati</taxon>
        <taxon>Pseudomonadota</taxon>
        <taxon>Gammaproteobacteria</taxon>
        <taxon>Enterobacterales</taxon>
        <taxon>Pectobacteriaceae</taxon>
        <taxon>Pectobacterium</taxon>
    </lineage>
</organism>
<keyword id="KW-0963">Cytoplasm</keyword>
<keyword id="KW-1185">Reference proteome</keyword>
<keyword id="KW-0690">Ribosome biogenesis</keyword>
<keyword id="KW-0694">RNA-binding</keyword>
<keyword id="KW-0699">rRNA-binding</keyword>
<accession>Q6DAH2</accession>
<dbReference type="EMBL" id="BX950851">
    <property type="protein sequence ID" value="CAG73201.1"/>
    <property type="molecule type" value="Genomic_DNA"/>
</dbReference>
<dbReference type="SMR" id="Q6DAH2"/>
<dbReference type="STRING" id="218491.ECA0281"/>
<dbReference type="KEGG" id="eca:ECA0281"/>
<dbReference type="PATRIC" id="fig|218491.5.peg.283"/>
<dbReference type="eggNOG" id="COG3028">
    <property type="taxonomic scope" value="Bacteria"/>
</dbReference>
<dbReference type="HOGENOM" id="CLU_106757_2_0_6"/>
<dbReference type="OrthoDB" id="5293604at2"/>
<dbReference type="Proteomes" id="UP000007966">
    <property type="component" value="Chromosome"/>
</dbReference>
<dbReference type="GO" id="GO:0005829">
    <property type="term" value="C:cytosol"/>
    <property type="evidence" value="ECO:0007669"/>
    <property type="project" value="TreeGrafter"/>
</dbReference>
<dbReference type="GO" id="GO:0043022">
    <property type="term" value="F:ribosome binding"/>
    <property type="evidence" value="ECO:0007669"/>
    <property type="project" value="UniProtKB-UniRule"/>
</dbReference>
<dbReference type="GO" id="GO:0019843">
    <property type="term" value="F:rRNA binding"/>
    <property type="evidence" value="ECO:0007669"/>
    <property type="project" value="UniProtKB-UniRule"/>
</dbReference>
<dbReference type="GO" id="GO:1902626">
    <property type="term" value="P:assembly of large subunit precursor of preribosome"/>
    <property type="evidence" value="ECO:0007669"/>
    <property type="project" value="UniProtKB-UniRule"/>
</dbReference>
<dbReference type="CDD" id="cd16331">
    <property type="entry name" value="YjgA-like"/>
    <property type="match status" value="1"/>
</dbReference>
<dbReference type="FunFam" id="1.10.60.30:FF:000001">
    <property type="entry name" value="UPF0307 protein YjgA"/>
    <property type="match status" value="1"/>
</dbReference>
<dbReference type="FunFam" id="1.10.60.30:FF:000002">
    <property type="entry name" value="UPF0307 protein YjgA"/>
    <property type="match status" value="1"/>
</dbReference>
<dbReference type="Gene3D" id="1.10.60.30">
    <property type="entry name" value="PSPTO4464-like domains"/>
    <property type="match status" value="2"/>
</dbReference>
<dbReference type="HAMAP" id="MF_00765">
    <property type="entry name" value="DarP"/>
    <property type="match status" value="1"/>
</dbReference>
<dbReference type="InterPro" id="IPR006839">
    <property type="entry name" value="DarP"/>
</dbReference>
<dbReference type="InterPro" id="IPR023153">
    <property type="entry name" value="DarP_sf"/>
</dbReference>
<dbReference type="NCBIfam" id="NF003593">
    <property type="entry name" value="PRK05255.1-1"/>
    <property type="match status" value="1"/>
</dbReference>
<dbReference type="PANTHER" id="PTHR38101">
    <property type="entry name" value="UPF0307 PROTEIN YJGA"/>
    <property type="match status" value="1"/>
</dbReference>
<dbReference type="PANTHER" id="PTHR38101:SF1">
    <property type="entry name" value="UPF0307 PROTEIN YJGA"/>
    <property type="match status" value="1"/>
</dbReference>
<dbReference type="Pfam" id="PF04751">
    <property type="entry name" value="DarP"/>
    <property type="match status" value="1"/>
</dbReference>
<dbReference type="PIRSF" id="PIRSF016183">
    <property type="entry name" value="UCP016183"/>
    <property type="match status" value="1"/>
</dbReference>
<dbReference type="SUPFAM" id="SSF158710">
    <property type="entry name" value="PSPTO4464-like"/>
    <property type="match status" value="1"/>
</dbReference>
<evidence type="ECO:0000255" key="1">
    <source>
        <dbReference type="HAMAP-Rule" id="MF_00765"/>
    </source>
</evidence>
<evidence type="ECO:0000256" key="2">
    <source>
        <dbReference type="SAM" id="MobiDB-lite"/>
    </source>
</evidence>
<protein>
    <recommendedName>
        <fullName evidence="1">Dual-action ribosomal maturation protein DarP</fullName>
    </recommendedName>
    <alternativeName>
        <fullName evidence="1">Large ribosomal subunit assembly factor DarP</fullName>
    </alternativeName>
</protein>
<sequence>MKQKPEDWLNDVPDNQEDDEDDEIIWVSKSEIKRDAEALKDLGAELVDLGKNALEKIPLDDDLRAAVELAQRITREGRRRQLQLIGKLLRARDPEPIQIALDKLNNRHNQQVALFHKLEQLRDRLITEGDDVIPEILALYSHADRQQLRSLVRNAQKEKAANKPPKAARQIFQYLRELAETTN</sequence>
<name>DARP_PECAS</name>
<proteinExistence type="inferred from homology"/>
<comment type="function">
    <text evidence="1">Member of a network of 50S ribosomal subunit biogenesis factors which assembles along the 30S-50S interface, preventing incorrect 23S rRNA structures from forming. Promotes peptidyl transferase center (PTC) maturation.</text>
</comment>
<comment type="subcellular location">
    <subcellularLocation>
        <location evidence="1">Cytoplasm</location>
    </subcellularLocation>
    <text evidence="1">Associates with late stage pre-50S ribosomal subunits.</text>
</comment>
<comment type="similarity">
    <text evidence="1">Belongs to the DarP family.</text>
</comment>
<reference key="1">
    <citation type="journal article" date="2004" name="Proc. Natl. Acad. Sci. U.S.A.">
        <title>Genome sequence of the enterobacterial phytopathogen Erwinia carotovora subsp. atroseptica and characterization of virulence factors.</title>
        <authorList>
            <person name="Bell K.S."/>
            <person name="Sebaihia M."/>
            <person name="Pritchard L."/>
            <person name="Holden M.T.G."/>
            <person name="Hyman L.J."/>
            <person name="Holeva M.C."/>
            <person name="Thomson N.R."/>
            <person name="Bentley S.D."/>
            <person name="Churcher L.J.C."/>
            <person name="Mungall K."/>
            <person name="Atkin R."/>
            <person name="Bason N."/>
            <person name="Brooks K."/>
            <person name="Chillingworth T."/>
            <person name="Clark K."/>
            <person name="Doggett J."/>
            <person name="Fraser A."/>
            <person name="Hance Z."/>
            <person name="Hauser H."/>
            <person name="Jagels K."/>
            <person name="Moule S."/>
            <person name="Norbertczak H."/>
            <person name="Ormond D."/>
            <person name="Price C."/>
            <person name="Quail M.A."/>
            <person name="Sanders M."/>
            <person name="Walker D."/>
            <person name="Whitehead S."/>
            <person name="Salmond G.P.C."/>
            <person name="Birch P.R.J."/>
            <person name="Parkhill J."/>
            <person name="Toth I.K."/>
        </authorList>
    </citation>
    <scope>NUCLEOTIDE SEQUENCE [LARGE SCALE GENOMIC DNA]</scope>
    <source>
        <strain>SCRI 1043 / ATCC BAA-672</strain>
    </source>
</reference>
<feature type="chain" id="PRO_0000257626" description="Dual-action ribosomal maturation protein DarP">
    <location>
        <begin position="1"/>
        <end position="183"/>
    </location>
</feature>
<feature type="region of interest" description="Disordered" evidence="2">
    <location>
        <begin position="1"/>
        <end position="21"/>
    </location>
</feature>